<gene>
    <name type="primary">Tsnax</name>
    <name type="synonym">Trax</name>
</gene>
<comment type="function">
    <text evidence="1">Acts in combination with TSN as an endonuclease involved in the activation of the RNA-induced silencing complex (RISC). Possible role in spermatogenesis (By similarity).</text>
</comment>
<comment type="subunit">
    <text evidence="1">Ring-shaped heterooctamer of six TSN and two TSNAX subunits. Interacts with GOLGA3, TSNAXIP1, SUN1 and AKAP9. Interacts with the homodimeric form of C1D following gamma-radiation. Interacts with TSN and C1D in a mutually exclusive manner (By similarity).</text>
</comment>
<comment type="interaction">
    <interactant intactId="EBI-2910751">
        <id>Q9QZE7</id>
    </interactant>
    <interactant intactId="EBI-2902822">
        <id>P30543</id>
        <label>Adora2a</label>
    </interactant>
    <organismsDiffer>true</organismsDiffer>
    <experiments>6</experiments>
</comment>
<comment type="subcellular location">
    <subcellularLocation>
        <location evidence="1">Cytoplasm</location>
        <location evidence="1">Perinuclear region</location>
    </subcellularLocation>
    <subcellularLocation>
        <location evidence="5">Golgi apparatus</location>
    </subcellularLocation>
    <subcellularLocation>
        <location evidence="1">Nucleus</location>
    </subcellularLocation>
    <text evidence="1">Expressed in the cytoplasm in the presence of TSN (By similarity). Accumulate in the Golgi complex of mid-late pachytene spermatocytes.</text>
</comment>
<comment type="tissue specificity">
    <text evidence="4">Detected in heart, brain, lung, liver, kidney and testis.</text>
</comment>
<comment type="PTM">
    <text evidence="1">Sumoylated with SUMO1.</text>
</comment>
<comment type="similarity">
    <text evidence="6">Belongs to the translin family.</text>
</comment>
<name>TSNAX_MOUSE</name>
<sequence>MNGKEGPGGFRKRKHDTFPHNQRREGKDASLSSPVMLAFKSFQQELDARHDKYERLVKLSRDITVESKRTIFLLHRITSAPDMEEILTESESKLDGVRQKILQVAQELSGEDMHQFHRAVTTGLQEYVEAVSFQHFIKTRSLISMEEINKQLTFTAEDSGKESKTPPAEGQEKQLVTWRLKLTPVDYLLGVADLTGELMRMCINSVGNGDIDTPFEVSQFLRQVYDGFSFIGNTGPYEVSKKLYTLKQSLAKVENACYALKVRGSEIPKHMLADVFSVKTDMIDQEESIS</sequence>
<proteinExistence type="evidence at protein level"/>
<keyword id="KW-0963">Cytoplasm</keyword>
<keyword id="KW-0217">Developmental protein</keyword>
<keyword id="KW-0221">Differentiation</keyword>
<keyword id="KW-0238">DNA-binding</keyword>
<keyword id="KW-0333">Golgi apparatus</keyword>
<keyword id="KW-1017">Isopeptide bond</keyword>
<keyword id="KW-0460">Magnesium</keyword>
<keyword id="KW-0479">Metal-binding</keyword>
<keyword id="KW-0539">Nucleus</keyword>
<keyword id="KW-1185">Reference proteome</keyword>
<keyword id="KW-0744">Spermatogenesis</keyword>
<keyword id="KW-0832">Ubl conjugation</keyword>
<evidence type="ECO:0000250" key="1"/>
<evidence type="ECO:0000250" key="2">
    <source>
        <dbReference type="UniProtKB" id="Q99598"/>
    </source>
</evidence>
<evidence type="ECO:0000256" key="3">
    <source>
        <dbReference type="SAM" id="MobiDB-lite"/>
    </source>
</evidence>
<evidence type="ECO:0000269" key="4">
    <source>
    </source>
</evidence>
<evidence type="ECO:0000269" key="5">
    <source>
    </source>
</evidence>
<evidence type="ECO:0000305" key="6"/>
<protein>
    <recommendedName>
        <fullName>Translin-associated protein X</fullName>
    </recommendedName>
    <alternativeName>
        <fullName>Translin-associated factor X</fullName>
    </alternativeName>
</protein>
<feature type="chain" id="PRO_0000191687" description="Translin-associated protein X">
    <location>
        <begin position="1"/>
        <end position="290"/>
    </location>
</feature>
<feature type="region of interest" description="Disordered" evidence="3">
    <location>
        <begin position="1"/>
        <end position="31"/>
    </location>
</feature>
<feature type="region of interest" description="Interaction with C1D" evidence="1">
    <location>
        <begin position="73"/>
        <end position="208"/>
    </location>
</feature>
<feature type="compositionally biased region" description="Basic and acidic residues" evidence="3">
    <location>
        <begin position="16"/>
        <end position="28"/>
    </location>
</feature>
<feature type="binding site" evidence="1">
    <location>
        <position position="129"/>
    </location>
    <ligand>
        <name>Mg(2+)</name>
        <dbReference type="ChEBI" id="CHEBI:18420"/>
    </ligand>
</feature>
<feature type="binding site" evidence="1">
    <location>
        <position position="197"/>
    </location>
    <ligand>
        <name>Mg(2+)</name>
        <dbReference type="ChEBI" id="CHEBI:18420"/>
    </ligand>
</feature>
<feature type="cross-link" description="Glycyl lysine isopeptide (Lys-Gly) (interchain with G-Cter in SUMO2)" evidence="2">
    <location>
        <position position="279"/>
    </location>
</feature>
<dbReference type="EMBL" id="AF187040">
    <property type="protein sequence ID" value="AAF05529.1"/>
    <property type="molecule type" value="mRNA"/>
</dbReference>
<dbReference type="EMBL" id="AK030407">
    <property type="protein sequence ID" value="BAC26948.1"/>
    <property type="molecule type" value="mRNA"/>
</dbReference>
<dbReference type="EMBL" id="AK146339">
    <property type="protein sequence ID" value="BAE27093.1"/>
    <property type="molecule type" value="mRNA"/>
</dbReference>
<dbReference type="EMBL" id="BC004611">
    <property type="protein sequence ID" value="AAH04611.1"/>
    <property type="molecule type" value="mRNA"/>
</dbReference>
<dbReference type="CCDS" id="CCDS22778.1"/>
<dbReference type="RefSeq" id="NP_058605.1">
    <property type="nucleotide sequence ID" value="NM_016909.3"/>
</dbReference>
<dbReference type="SMR" id="Q9QZE7"/>
<dbReference type="BioGRID" id="207317">
    <property type="interactions" value="27"/>
</dbReference>
<dbReference type="ComplexPortal" id="CPX-4629">
    <property type="entry name" value="C3PO endoribonuclease complex"/>
</dbReference>
<dbReference type="FunCoup" id="Q9QZE7">
    <property type="interactions" value="4207"/>
</dbReference>
<dbReference type="IntAct" id="Q9QZE7">
    <property type="interactions" value="2"/>
</dbReference>
<dbReference type="STRING" id="10090.ENSMUSP00000075290"/>
<dbReference type="GlyGen" id="Q9QZE7">
    <property type="glycosylation" value="1 site"/>
</dbReference>
<dbReference type="iPTMnet" id="Q9QZE7"/>
<dbReference type="PhosphoSitePlus" id="Q9QZE7"/>
<dbReference type="jPOST" id="Q9QZE7"/>
<dbReference type="PaxDb" id="10090-ENSMUSP00000075290"/>
<dbReference type="PeptideAtlas" id="Q9QZE7"/>
<dbReference type="ProteomicsDB" id="297727"/>
<dbReference type="Pumba" id="Q9QZE7"/>
<dbReference type="DNASU" id="53424"/>
<dbReference type="Ensembl" id="ENSMUST00000075896.7">
    <property type="protein sequence ID" value="ENSMUSP00000075290.7"/>
    <property type="gene ID" value="ENSMUSG00000056820.8"/>
</dbReference>
<dbReference type="GeneID" id="53424"/>
<dbReference type="KEGG" id="mmu:53424"/>
<dbReference type="UCSC" id="uc009nxz.1">
    <property type="organism name" value="mouse"/>
</dbReference>
<dbReference type="AGR" id="MGI:1855672"/>
<dbReference type="CTD" id="7257"/>
<dbReference type="MGI" id="MGI:1855672">
    <property type="gene designation" value="Tsnax"/>
</dbReference>
<dbReference type="VEuPathDB" id="HostDB:ENSMUSG00000056820"/>
<dbReference type="eggNOG" id="KOG3066">
    <property type="taxonomic scope" value="Eukaryota"/>
</dbReference>
<dbReference type="GeneTree" id="ENSGT00940000153568"/>
<dbReference type="HOGENOM" id="CLU_067225_1_0_1"/>
<dbReference type="InParanoid" id="Q9QZE7"/>
<dbReference type="OMA" id="DTCMETC"/>
<dbReference type="OrthoDB" id="31005at2759"/>
<dbReference type="PhylomeDB" id="Q9QZE7"/>
<dbReference type="TreeFam" id="TF323633"/>
<dbReference type="Reactome" id="R-MMU-426486">
    <property type="pathway name" value="Small interfering RNA (siRNA) biogenesis"/>
</dbReference>
<dbReference type="BioGRID-ORCS" id="53424">
    <property type="hits" value="3 hits in 76 CRISPR screens"/>
</dbReference>
<dbReference type="ChiTaRS" id="Tsnax">
    <property type="organism name" value="mouse"/>
</dbReference>
<dbReference type="PRO" id="PR:Q9QZE7"/>
<dbReference type="Proteomes" id="UP000000589">
    <property type="component" value="Chromosome 8"/>
</dbReference>
<dbReference type="RNAct" id="Q9QZE7">
    <property type="molecule type" value="protein"/>
</dbReference>
<dbReference type="Bgee" id="ENSMUSG00000056820">
    <property type="expression patterns" value="Expressed in superior frontal gyrus and 264 other cell types or tissues"/>
</dbReference>
<dbReference type="ExpressionAtlas" id="Q9QZE7">
    <property type="expression patterns" value="baseline and differential"/>
</dbReference>
<dbReference type="GO" id="GO:0005737">
    <property type="term" value="C:cytoplasm"/>
    <property type="evidence" value="ECO:0000314"/>
    <property type="project" value="MGI"/>
</dbReference>
<dbReference type="GO" id="GO:1902555">
    <property type="term" value="C:endoribonuclease complex"/>
    <property type="evidence" value="ECO:0000266"/>
    <property type="project" value="ComplexPortal"/>
</dbReference>
<dbReference type="GO" id="GO:0005794">
    <property type="term" value="C:Golgi apparatus"/>
    <property type="evidence" value="ECO:0007669"/>
    <property type="project" value="UniProtKB-SubCell"/>
</dbReference>
<dbReference type="GO" id="GO:0005654">
    <property type="term" value="C:nucleoplasm"/>
    <property type="evidence" value="ECO:0007669"/>
    <property type="project" value="Ensembl"/>
</dbReference>
<dbReference type="GO" id="GO:0048471">
    <property type="term" value="C:perinuclear region of cytoplasm"/>
    <property type="evidence" value="ECO:0007669"/>
    <property type="project" value="UniProtKB-SubCell"/>
</dbReference>
<dbReference type="GO" id="GO:0031687">
    <property type="term" value="F:A2A adenosine receptor binding"/>
    <property type="evidence" value="ECO:0007669"/>
    <property type="project" value="Ensembl"/>
</dbReference>
<dbReference type="GO" id="GO:0046872">
    <property type="term" value="F:metal ion binding"/>
    <property type="evidence" value="ECO:0007669"/>
    <property type="project" value="UniProtKB-KW"/>
</dbReference>
<dbReference type="GO" id="GO:0044877">
    <property type="term" value="F:protein-containing complex binding"/>
    <property type="evidence" value="ECO:0007669"/>
    <property type="project" value="Ensembl"/>
</dbReference>
<dbReference type="GO" id="GO:0043565">
    <property type="term" value="F:sequence-specific DNA binding"/>
    <property type="evidence" value="ECO:0007669"/>
    <property type="project" value="Ensembl"/>
</dbReference>
<dbReference type="GO" id="GO:0003697">
    <property type="term" value="F:single-stranded DNA binding"/>
    <property type="evidence" value="ECO:0007669"/>
    <property type="project" value="Ensembl"/>
</dbReference>
<dbReference type="GO" id="GO:0030154">
    <property type="term" value="P:cell differentiation"/>
    <property type="evidence" value="ECO:0007669"/>
    <property type="project" value="UniProtKB-KW"/>
</dbReference>
<dbReference type="GO" id="GO:0035194">
    <property type="term" value="P:regulatory ncRNA-mediated post-transcriptional gene silencing"/>
    <property type="evidence" value="ECO:0000303"/>
    <property type="project" value="ComplexPortal"/>
</dbReference>
<dbReference type="GO" id="GO:0030422">
    <property type="term" value="P:siRNA processing"/>
    <property type="evidence" value="ECO:0000266"/>
    <property type="project" value="ComplexPortal"/>
</dbReference>
<dbReference type="GO" id="GO:0007283">
    <property type="term" value="P:spermatogenesis"/>
    <property type="evidence" value="ECO:0007669"/>
    <property type="project" value="UniProtKB-KW"/>
</dbReference>
<dbReference type="FunFam" id="1.20.58.190:FF:000002">
    <property type="entry name" value="Translin-associated factor X"/>
    <property type="match status" value="1"/>
</dbReference>
<dbReference type="FunFam" id="1.20.58.200:FF:000001">
    <property type="entry name" value="Translin-associated factor X"/>
    <property type="match status" value="1"/>
</dbReference>
<dbReference type="Gene3D" id="1.20.58.190">
    <property type="entry name" value="Translin, domain 1"/>
    <property type="match status" value="1"/>
</dbReference>
<dbReference type="Gene3D" id="1.20.58.200">
    <property type="entry name" value="Translin, domain 2"/>
    <property type="match status" value="1"/>
</dbReference>
<dbReference type="InterPro" id="IPR016069">
    <property type="entry name" value="Translin_C"/>
</dbReference>
<dbReference type="InterPro" id="IPR002848">
    <property type="entry name" value="Translin_fam"/>
</dbReference>
<dbReference type="InterPro" id="IPR016068">
    <property type="entry name" value="Translin_N"/>
</dbReference>
<dbReference type="InterPro" id="IPR036081">
    <property type="entry name" value="Translin_sf"/>
</dbReference>
<dbReference type="PANTHER" id="PTHR10741">
    <property type="entry name" value="TRANSLIN AND TRANSLIN ASSOCIATED PROTEIN X"/>
    <property type="match status" value="1"/>
</dbReference>
<dbReference type="Pfam" id="PF01997">
    <property type="entry name" value="Translin"/>
    <property type="match status" value="1"/>
</dbReference>
<dbReference type="SUPFAM" id="SSF74784">
    <property type="entry name" value="Translin"/>
    <property type="match status" value="1"/>
</dbReference>
<accession>Q9QZE7</accession>
<accession>Q3UJR2</accession>
<organism>
    <name type="scientific">Mus musculus</name>
    <name type="common">Mouse</name>
    <dbReference type="NCBI Taxonomy" id="10090"/>
    <lineage>
        <taxon>Eukaryota</taxon>
        <taxon>Metazoa</taxon>
        <taxon>Chordata</taxon>
        <taxon>Craniata</taxon>
        <taxon>Vertebrata</taxon>
        <taxon>Euteleostomi</taxon>
        <taxon>Mammalia</taxon>
        <taxon>Eutheria</taxon>
        <taxon>Euarchontoglires</taxon>
        <taxon>Glires</taxon>
        <taxon>Rodentia</taxon>
        <taxon>Myomorpha</taxon>
        <taxon>Muroidea</taxon>
        <taxon>Muridae</taxon>
        <taxon>Murinae</taxon>
        <taxon>Mus</taxon>
        <taxon>Mus</taxon>
    </lineage>
</organism>
<reference key="1">
    <citation type="journal article" date="2000" name="Mamm. Genome">
        <title>Isolation and characterization of the mouse translin-associated protein X (Trax) gene.</title>
        <authorList>
            <person name="Devon R.S."/>
            <person name="Taylor M.S."/>
            <person name="Millar J.K."/>
            <person name="Porteous D.J."/>
        </authorList>
    </citation>
    <scope>NUCLEOTIDE SEQUENCE [MRNA]</scope>
    <scope>TISSUE SPECIFICITY</scope>
</reference>
<reference key="2">
    <citation type="journal article" date="2005" name="Science">
        <title>The transcriptional landscape of the mammalian genome.</title>
        <authorList>
            <person name="Carninci P."/>
            <person name="Kasukawa T."/>
            <person name="Katayama S."/>
            <person name="Gough J."/>
            <person name="Frith M.C."/>
            <person name="Maeda N."/>
            <person name="Oyama R."/>
            <person name="Ravasi T."/>
            <person name="Lenhard B."/>
            <person name="Wells C."/>
            <person name="Kodzius R."/>
            <person name="Shimokawa K."/>
            <person name="Bajic V.B."/>
            <person name="Brenner S.E."/>
            <person name="Batalov S."/>
            <person name="Forrest A.R."/>
            <person name="Zavolan M."/>
            <person name="Davis M.J."/>
            <person name="Wilming L.G."/>
            <person name="Aidinis V."/>
            <person name="Allen J.E."/>
            <person name="Ambesi-Impiombato A."/>
            <person name="Apweiler R."/>
            <person name="Aturaliya R.N."/>
            <person name="Bailey T.L."/>
            <person name="Bansal M."/>
            <person name="Baxter L."/>
            <person name="Beisel K.W."/>
            <person name="Bersano T."/>
            <person name="Bono H."/>
            <person name="Chalk A.M."/>
            <person name="Chiu K.P."/>
            <person name="Choudhary V."/>
            <person name="Christoffels A."/>
            <person name="Clutterbuck D.R."/>
            <person name="Crowe M.L."/>
            <person name="Dalla E."/>
            <person name="Dalrymple B.P."/>
            <person name="de Bono B."/>
            <person name="Della Gatta G."/>
            <person name="di Bernardo D."/>
            <person name="Down T."/>
            <person name="Engstrom P."/>
            <person name="Fagiolini M."/>
            <person name="Faulkner G."/>
            <person name="Fletcher C.F."/>
            <person name="Fukushima T."/>
            <person name="Furuno M."/>
            <person name="Futaki S."/>
            <person name="Gariboldi M."/>
            <person name="Georgii-Hemming P."/>
            <person name="Gingeras T.R."/>
            <person name="Gojobori T."/>
            <person name="Green R.E."/>
            <person name="Gustincich S."/>
            <person name="Harbers M."/>
            <person name="Hayashi Y."/>
            <person name="Hensch T.K."/>
            <person name="Hirokawa N."/>
            <person name="Hill D."/>
            <person name="Huminiecki L."/>
            <person name="Iacono M."/>
            <person name="Ikeo K."/>
            <person name="Iwama A."/>
            <person name="Ishikawa T."/>
            <person name="Jakt M."/>
            <person name="Kanapin A."/>
            <person name="Katoh M."/>
            <person name="Kawasawa Y."/>
            <person name="Kelso J."/>
            <person name="Kitamura H."/>
            <person name="Kitano H."/>
            <person name="Kollias G."/>
            <person name="Krishnan S.P."/>
            <person name="Kruger A."/>
            <person name="Kummerfeld S.K."/>
            <person name="Kurochkin I.V."/>
            <person name="Lareau L.F."/>
            <person name="Lazarevic D."/>
            <person name="Lipovich L."/>
            <person name="Liu J."/>
            <person name="Liuni S."/>
            <person name="McWilliam S."/>
            <person name="Madan Babu M."/>
            <person name="Madera M."/>
            <person name="Marchionni L."/>
            <person name="Matsuda H."/>
            <person name="Matsuzawa S."/>
            <person name="Miki H."/>
            <person name="Mignone F."/>
            <person name="Miyake S."/>
            <person name="Morris K."/>
            <person name="Mottagui-Tabar S."/>
            <person name="Mulder N."/>
            <person name="Nakano N."/>
            <person name="Nakauchi H."/>
            <person name="Ng P."/>
            <person name="Nilsson R."/>
            <person name="Nishiguchi S."/>
            <person name="Nishikawa S."/>
            <person name="Nori F."/>
            <person name="Ohara O."/>
            <person name="Okazaki Y."/>
            <person name="Orlando V."/>
            <person name="Pang K.C."/>
            <person name="Pavan W.J."/>
            <person name="Pavesi G."/>
            <person name="Pesole G."/>
            <person name="Petrovsky N."/>
            <person name="Piazza S."/>
            <person name="Reed J."/>
            <person name="Reid J.F."/>
            <person name="Ring B.Z."/>
            <person name="Ringwald M."/>
            <person name="Rost B."/>
            <person name="Ruan Y."/>
            <person name="Salzberg S.L."/>
            <person name="Sandelin A."/>
            <person name="Schneider C."/>
            <person name="Schoenbach C."/>
            <person name="Sekiguchi K."/>
            <person name="Semple C.A."/>
            <person name="Seno S."/>
            <person name="Sessa L."/>
            <person name="Sheng Y."/>
            <person name="Shibata Y."/>
            <person name="Shimada H."/>
            <person name="Shimada K."/>
            <person name="Silva D."/>
            <person name="Sinclair B."/>
            <person name="Sperling S."/>
            <person name="Stupka E."/>
            <person name="Sugiura K."/>
            <person name="Sultana R."/>
            <person name="Takenaka Y."/>
            <person name="Taki K."/>
            <person name="Tammoja K."/>
            <person name="Tan S.L."/>
            <person name="Tang S."/>
            <person name="Taylor M.S."/>
            <person name="Tegner J."/>
            <person name="Teichmann S.A."/>
            <person name="Ueda H.R."/>
            <person name="van Nimwegen E."/>
            <person name="Verardo R."/>
            <person name="Wei C.L."/>
            <person name="Yagi K."/>
            <person name="Yamanishi H."/>
            <person name="Zabarovsky E."/>
            <person name="Zhu S."/>
            <person name="Zimmer A."/>
            <person name="Hide W."/>
            <person name="Bult C."/>
            <person name="Grimmond S.M."/>
            <person name="Teasdale R.D."/>
            <person name="Liu E.T."/>
            <person name="Brusic V."/>
            <person name="Quackenbush J."/>
            <person name="Wahlestedt C."/>
            <person name="Mattick J.S."/>
            <person name="Hume D.A."/>
            <person name="Kai C."/>
            <person name="Sasaki D."/>
            <person name="Tomaru Y."/>
            <person name="Fukuda S."/>
            <person name="Kanamori-Katayama M."/>
            <person name="Suzuki M."/>
            <person name="Aoki J."/>
            <person name="Arakawa T."/>
            <person name="Iida J."/>
            <person name="Imamura K."/>
            <person name="Itoh M."/>
            <person name="Kato T."/>
            <person name="Kawaji H."/>
            <person name="Kawagashira N."/>
            <person name="Kawashima T."/>
            <person name="Kojima M."/>
            <person name="Kondo S."/>
            <person name="Konno H."/>
            <person name="Nakano K."/>
            <person name="Ninomiya N."/>
            <person name="Nishio T."/>
            <person name="Okada M."/>
            <person name="Plessy C."/>
            <person name="Shibata K."/>
            <person name="Shiraki T."/>
            <person name="Suzuki S."/>
            <person name="Tagami M."/>
            <person name="Waki K."/>
            <person name="Watahiki A."/>
            <person name="Okamura-Oho Y."/>
            <person name="Suzuki H."/>
            <person name="Kawai J."/>
            <person name="Hayashizaki Y."/>
        </authorList>
    </citation>
    <scope>NUCLEOTIDE SEQUENCE [LARGE SCALE MRNA]</scope>
    <source>
        <strain>C57BL/6J</strain>
        <strain>DBA/2J</strain>
        <tissue>Pituitary</tissue>
    </source>
</reference>
<reference key="3">
    <citation type="journal article" date="2004" name="Genome Res.">
        <title>The status, quality, and expansion of the NIH full-length cDNA project: the Mammalian Gene Collection (MGC).</title>
        <authorList>
            <consortium name="The MGC Project Team"/>
        </authorList>
    </citation>
    <scope>NUCLEOTIDE SEQUENCE [LARGE SCALE MRNA]</scope>
    <source>
        <strain>FVB/N</strain>
        <tissue>Mammary tumor</tissue>
    </source>
</reference>
<reference key="4">
    <citation type="journal article" date="2004" name="J. Histochem. Cytochem.">
        <title>Co-localization of Trax and Mea2 in Golgi complex of pachytene spermatocytes in the mouse.</title>
        <authorList>
            <person name="Matsuda M."/>
            <person name="Kondo M."/>
            <person name="Kashiwabara S."/>
            <person name="Yoshihara M."/>
            <person name="Sutou S."/>
            <person name="Matsukuma S."/>
        </authorList>
    </citation>
    <scope>SUBCELLULAR LOCATION</scope>
    <scope>INTERACTION WITH GOLGA3</scope>
</reference>
<reference key="5">
    <citation type="journal article" date="2010" name="Cell">
        <title>A tissue-specific atlas of mouse protein phosphorylation and expression.</title>
        <authorList>
            <person name="Huttlin E.L."/>
            <person name="Jedrychowski M.P."/>
            <person name="Elias J.E."/>
            <person name="Goswami T."/>
            <person name="Rad R."/>
            <person name="Beausoleil S.A."/>
            <person name="Villen J."/>
            <person name="Haas W."/>
            <person name="Sowa M.E."/>
            <person name="Gygi S.P."/>
        </authorList>
    </citation>
    <scope>IDENTIFICATION BY MASS SPECTROMETRY [LARGE SCALE ANALYSIS]</scope>
    <source>
        <tissue>Brain</tissue>
        <tissue>Heart</tissue>
        <tissue>Kidney</tissue>
        <tissue>Liver</tissue>
        <tissue>Lung</tissue>
        <tissue>Pancreas</tissue>
        <tissue>Spleen</tissue>
        <tissue>Testis</tissue>
    </source>
</reference>